<feature type="chain" id="PRO_1000140305" description="HTH-type transcriptional repressor PurR">
    <location>
        <begin position="1"/>
        <end position="341"/>
    </location>
</feature>
<feature type="domain" description="HTH lacI-type" evidence="1">
    <location>
        <begin position="2"/>
        <end position="56"/>
    </location>
</feature>
<feature type="DNA-binding region" description="H-T-H motif" evidence="1">
    <location>
        <begin position="4"/>
        <end position="23"/>
    </location>
</feature>
<feature type="DNA-binding region" evidence="1">
    <location>
        <begin position="48"/>
        <end position="56"/>
    </location>
</feature>
<feature type="binding site" evidence="1">
    <location>
        <position position="73"/>
    </location>
    <ligand>
        <name>hypoxanthine</name>
        <dbReference type="ChEBI" id="CHEBI:17368"/>
    </ligand>
</feature>
<feature type="binding site" evidence="1">
    <location>
        <position position="190"/>
    </location>
    <ligand>
        <name>hypoxanthine</name>
        <dbReference type="ChEBI" id="CHEBI:17368"/>
    </ligand>
</feature>
<feature type="binding site" evidence="1">
    <location>
        <position position="192"/>
    </location>
    <ligand>
        <name>hypoxanthine</name>
        <dbReference type="ChEBI" id="CHEBI:17368"/>
    </ligand>
</feature>
<feature type="binding site" evidence="1">
    <location>
        <position position="221"/>
    </location>
    <ligand>
        <name>hypoxanthine</name>
        <dbReference type="ChEBI" id="CHEBI:17368"/>
    </ligand>
</feature>
<feature type="binding site" evidence="1">
    <location>
        <position position="275"/>
    </location>
    <ligand>
        <name>hypoxanthine</name>
        <dbReference type="ChEBI" id="CHEBI:17368"/>
    </ligand>
</feature>
<name>PURR_SHIB3</name>
<accession>B2U2G3</accession>
<evidence type="ECO:0000255" key="1">
    <source>
        <dbReference type="HAMAP-Rule" id="MF_01277"/>
    </source>
</evidence>
<keyword id="KW-0238">DNA-binding</keyword>
<keyword id="KW-0658">Purine biosynthesis</keyword>
<keyword id="KW-1185">Reference proteome</keyword>
<keyword id="KW-0678">Repressor</keyword>
<keyword id="KW-0804">Transcription</keyword>
<keyword id="KW-0805">Transcription regulation</keyword>
<comment type="function">
    <text evidence="1">Is the main repressor of the genes involved in the de novo synthesis of purine nucleotides, regulating purB, purC, purEK, purF, purHD, purL, purMN and guaBA expression. PurR is allosterically activated to bind its cognate DNA by binding the purine corepressors, hypoxanthine or guanine, thereby effecting transcription repression.</text>
</comment>
<comment type="pathway">
    <text>Purine metabolism; purine nucleotide biosynthesis [regulation].</text>
</comment>
<comment type="subunit">
    <text evidence="1">Homodimer.</text>
</comment>
<comment type="domain">
    <text evidence="1">Consists of two structural and functional domains: an N-terminal DNA-binding domain, approximately the first 60 residues, and a larger C-terminal domain, approximately 280 residues, which imparts the function of corepressor binding and oligomerization.</text>
</comment>
<proteinExistence type="inferred from homology"/>
<sequence length="341" mass="38175">MATIKDVAKRANVSTTTVSHVINKTRFVAEETRNAVWAAIKELHYSPSAVARSLKVNHTKSIGLLATSSEAAYFAEIIEAVEKNCFQKGYTLILGNAWNNLEKQRAYLSMMAQKRVDGLLVMCSEYPEPLLAMLEEYRHIPMVVMDWGEAKADFTDAVIDNAFEGGYMAGRYLIERGHREIGVIPGPLERNTGAGRLAGFMKAMEEAMIKVPESWIVQGDFEPESGYRAMQQILSQPHRPTAVFCGGDIMAMGALCAADEMGLRVPQDVSLIGYDNVRNARYFTPALTTIHQPKDSLGETAFNMLLDRIVNKREEPQSIEVHPRLIERRSVADGPFRDYRR</sequence>
<reference key="1">
    <citation type="submission" date="2008-05" db="EMBL/GenBank/DDBJ databases">
        <title>Complete sequence of Shigella boydii serotype 18 strain BS512.</title>
        <authorList>
            <person name="Rasko D.A."/>
            <person name="Rosovitz M."/>
            <person name="Maurelli A.T."/>
            <person name="Myers G."/>
            <person name="Seshadri R."/>
            <person name="Cer R."/>
            <person name="Jiang L."/>
            <person name="Ravel J."/>
            <person name="Sebastian Y."/>
        </authorList>
    </citation>
    <scope>NUCLEOTIDE SEQUENCE [LARGE SCALE GENOMIC DNA]</scope>
    <source>
        <strain>CDC 3083-94 / BS512</strain>
    </source>
</reference>
<dbReference type="EMBL" id="CP001063">
    <property type="protein sequence ID" value="ACD07617.1"/>
    <property type="molecule type" value="Genomic_DNA"/>
</dbReference>
<dbReference type="RefSeq" id="WP_000190982.1">
    <property type="nucleotide sequence ID" value="NC_010658.1"/>
</dbReference>
<dbReference type="SMR" id="B2U2G3"/>
<dbReference type="STRING" id="344609.SbBS512_E1857"/>
<dbReference type="GeneID" id="75204504"/>
<dbReference type="KEGG" id="sbc:SbBS512_E1857"/>
<dbReference type="HOGENOM" id="CLU_037628_6_2_6"/>
<dbReference type="UniPathway" id="UPA00488"/>
<dbReference type="Proteomes" id="UP000001030">
    <property type="component" value="Chromosome"/>
</dbReference>
<dbReference type="GO" id="GO:0003700">
    <property type="term" value="F:DNA-binding transcription factor activity"/>
    <property type="evidence" value="ECO:0007669"/>
    <property type="project" value="TreeGrafter"/>
</dbReference>
<dbReference type="GO" id="GO:0000976">
    <property type="term" value="F:transcription cis-regulatory region binding"/>
    <property type="evidence" value="ECO:0007669"/>
    <property type="project" value="TreeGrafter"/>
</dbReference>
<dbReference type="GO" id="GO:0045892">
    <property type="term" value="P:negative regulation of DNA-templated transcription"/>
    <property type="evidence" value="ECO:0007669"/>
    <property type="project" value="UniProtKB-UniRule"/>
</dbReference>
<dbReference type="GO" id="GO:0006164">
    <property type="term" value="P:purine nucleotide biosynthetic process"/>
    <property type="evidence" value="ECO:0007669"/>
    <property type="project" value="UniProtKB-UniPathway"/>
</dbReference>
<dbReference type="CDD" id="cd01392">
    <property type="entry name" value="HTH_LacI"/>
    <property type="match status" value="1"/>
</dbReference>
<dbReference type="CDD" id="cd06275">
    <property type="entry name" value="PBP1_PurR"/>
    <property type="match status" value="1"/>
</dbReference>
<dbReference type="FunFam" id="1.10.260.40:FF:000002">
    <property type="entry name" value="HTH-type transcriptional repressor PurR"/>
    <property type="match status" value="1"/>
</dbReference>
<dbReference type="FunFam" id="3.40.50.2300:FF:000045">
    <property type="entry name" value="HTH-type transcriptional repressor PurR"/>
    <property type="match status" value="1"/>
</dbReference>
<dbReference type="Gene3D" id="3.40.50.2300">
    <property type="match status" value="2"/>
</dbReference>
<dbReference type="Gene3D" id="1.10.260.40">
    <property type="entry name" value="lambda repressor-like DNA-binding domains"/>
    <property type="match status" value="1"/>
</dbReference>
<dbReference type="HAMAP" id="MF_01277">
    <property type="entry name" value="HTH_type_PurR"/>
    <property type="match status" value="1"/>
</dbReference>
<dbReference type="InterPro" id="IPR000843">
    <property type="entry name" value="HTH_LacI"/>
</dbReference>
<dbReference type="InterPro" id="IPR046335">
    <property type="entry name" value="LacI/GalR-like_sensor"/>
</dbReference>
<dbReference type="InterPro" id="IPR010982">
    <property type="entry name" value="Lambda_DNA-bd_dom_sf"/>
</dbReference>
<dbReference type="InterPro" id="IPR028082">
    <property type="entry name" value="Peripla_BP_I"/>
</dbReference>
<dbReference type="InterPro" id="IPR023588">
    <property type="entry name" value="Tscrpt_reg_HTH_PurR"/>
</dbReference>
<dbReference type="NCBIfam" id="NF007979">
    <property type="entry name" value="PRK10703.1"/>
    <property type="match status" value="1"/>
</dbReference>
<dbReference type="PANTHER" id="PTHR30146:SF148">
    <property type="entry name" value="HTH-TYPE TRANSCRIPTIONAL REPRESSOR PURR-RELATED"/>
    <property type="match status" value="1"/>
</dbReference>
<dbReference type="PANTHER" id="PTHR30146">
    <property type="entry name" value="LACI-RELATED TRANSCRIPTIONAL REPRESSOR"/>
    <property type="match status" value="1"/>
</dbReference>
<dbReference type="Pfam" id="PF00356">
    <property type="entry name" value="LacI"/>
    <property type="match status" value="1"/>
</dbReference>
<dbReference type="Pfam" id="PF13377">
    <property type="entry name" value="Peripla_BP_3"/>
    <property type="match status" value="1"/>
</dbReference>
<dbReference type="PRINTS" id="PR00036">
    <property type="entry name" value="HTHLACI"/>
</dbReference>
<dbReference type="SMART" id="SM00354">
    <property type="entry name" value="HTH_LACI"/>
    <property type="match status" value="1"/>
</dbReference>
<dbReference type="SUPFAM" id="SSF47413">
    <property type="entry name" value="lambda repressor-like DNA-binding domains"/>
    <property type="match status" value="1"/>
</dbReference>
<dbReference type="SUPFAM" id="SSF53822">
    <property type="entry name" value="Periplasmic binding protein-like I"/>
    <property type="match status" value="1"/>
</dbReference>
<dbReference type="PROSITE" id="PS00356">
    <property type="entry name" value="HTH_LACI_1"/>
    <property type="match status" value="1"/>
</dbReference>
<dbReference type="PROSITE" id="PS50932">
    <property type="entry name" value="HTH_LACI_2"/>
    <property type="match status" value="1"/>
</dbReference>
<gene>
    <name evidence="1" type="primary">purR</name>
    <name type="ordered locus">SbBS512_E1857</name>
</gene>
<protein>
    <recommendedName>
        <fullName evidence="1">HTH-type transcriptional repressor PurR</fullName>
    </recommendedName>
    <alternativeName>
        <fullName evidence="1">Pur regulon repressor</fullName>
    </alternativeName>
    <alternativeName>
        <fullName evidence="1">Purine nucleotide synthesis repressor</fullName>
    </alternativeName>
</protein>
<organism>
    <name type="scientific">Shigella boydii serotype 18 (strain CDC 3083-94 / BS512)</name>
    <dbReference type="NCBI Taxonomy" id="344609"/>
    <lineage>
        <taxon>Bacteria</taxon>
        <taxon>Pseudomonadati</taxon>
        <taxon>Pseudomonadota</taxon>
        <taxon>Gammaproteobacteria</taxon>
        <taxon>Enterobacterales</taxon>
        <taxon>Enterobacteriaceae</taxon>
        <taxon>Shigella</taxon>
    </lineage>
</organism>